<reference key="1">
    <citation type="journal article" date="2010" name="BMC Genomics">
        <title>A genomic perspective on the potential of Actinobacillus succinogenes for industrial succinate production.</title>
        <authorList>
            <person name="McKinlay J.B."/>
            <person name="Laivenieks M."/>
            <person name="Schindler B.D."/>
            <person name="McKinlay A.A."/>
            <person name="Siddaramappa S."/>
            <person name="Challacombe J.F."/>
            <person name="Lowry S.R."/>
            <person name="Clum A."/>
            <person name="Lapidus A.L."/>
            <person name="Burkhart K.B."/>
            <person name="Harkins V."/>
            <person name="Vieille C."/>
        </authorList>
    </citation>
    <scope>NUCLEOTIDE SEQUENCE [LARGE SCALE GENOMIC DNA]</scope>
    <source>
        <strain>ATCC 55618 / DSM 22257 / CCUG 43843 / 130Z</strain>
    </source>
</reference>
<comment type="subcellular location">
    <subcellularLocation>
        <location evidence="1">Cytoplasm</location>
        <location evidence="1">Nucleoid</location>
    </subcellularLocation>
</comment>
<comment type="similarity">
    <text evidence="1">Belongs to the YejK family.</text>
</comment>
<sequence>MSITVNQIVLHQLVKQAAEDGNVQLNTVLRNDLLQISAEVEQLMLELHQAYQGKAKGYGVFKEESLFARQLNRLLEQETDFLPFSYEAAKLLATELGKYTFAESGTLVLCQYNFLATDYLFIALLDSRISMLVDENLEIQRTQYLNINQFDIAARINLTDLRLNAQSNRYLTFIKGRVGRKVGDFFMDFLGADEGLNPQVQNQCLLQAVSDYCEQGELNKAQTQAVKKQVFDYCKGQINSGDEIALAELSEELPTLNERSFAAFAHERDYGLEESIPPLRSTLKSLTKFSGSGKGVTISFDAELINQRIIWDEAADSLTIHGLPANLRDQLRRNLTHEN</sequence>
<dbReference type="EMBL" id="CP000746">
    <property type="protein sequence ID" value="ABR74149.1"/>
    <property type="molecule type" value="Genomic_DNA"/>
</dbReference>
<dbReference type="RefSeq" id="WP_012072527.1">
    <property type="nucleotide sequence ID" value="NC_009655.1"/>
</dbReference>
<dbReference type="SMR" id="A6VMF2"/>
<dbReference type="STRING" id="339671.Asuc_0779"/>
<dbReference type="KEGG" id="asu:Asuc_0779"/>
<dbReference type="eggNOG" id="COG3081">
    <property type="taxonomic scope" value="Bacteria"/>
</dbReference>
<dbReference type="HOGENOM" id="CLU_063050_0_1_6"/>
<dbReference type="OrthoDB" id="9131762at2"/>
<dbReference type="Proteomes" id="UP000001114">
    <property type="component" value="Chromosome"/>
</dbReference>
<dbReference type="GO" id="GO:0043590">
    <property type="term" value="C:bacterial nucleoid"/>
    <property type="evidence" value="ECO:0007669"/>
    <property type="project" value="TreeGrafter"/>
</dbReference>
<dbReference type="GO" id="GO:0005737">
    <property type="term" value="C:cytoplasm"/>
    <property type="evidence" value="ECO:0007669"/>
    <property type="project" value="UniProtKB-UniRule"/>
</dbReference>
<dbReference type="GO" id="GO:0003690">
    <property type="term" value="F:double-stranded DNA binding"/>
    <property type="evidence" value="ECO:0007669"/>
    <property type="project" value="TreeGrafter"/>
</dbReference>
<dbReference type="GO" id="GO:0003727">
    <property type="term" value="F:single-stranded RNA binding"/>
    <property type="evidence" value="ECO:0007669"/>
    <property type="project" value="TreeGrafter"/>
</dbReference>
<dbReference type="HAMAP" id="MF_00730">
    <property type="entry name" value="NdpA"/>
    <property type="match status" value="1"/>
</dbReference>
<dbReference type="InterPro" id="IPR007358">
    <property type="entry name" value="Nucleoid_associated_NdpA"/>
</dbReference>
<dbReference type="NCBIfam" id="NF001557">
    <property type="entry name" value="PRK00378.1"/>
    <property type="match status" value="1"/>
</dbReference>
<dbReference type="PANTHER" id="PTHR38772">
    <property type="match status" value="1"/>
</dbReference>
<dbReference type="PANTHER" id="PTHR38772:SF1">
    <property type="entry name" value="NUCLEOID-ASSOCIATED PROTEIN YEJK"/>
    <property type="match status" value="1"/>
</dbReference>
<dbReference type="Pfam" id="PF04245">
    <property type="entry name" value="NA37"/>
    <property type="match status" value="1"/>
</dbReference>
<proteinExistence type="inferred from homology"/>
<keyword id="KW-0963">Cytoplasm</keyword>
<keyword id="KW-1185">Reference proteome</keyword>
<protein>
    <recommendedName>
        <fullName evidence="1">Nucleoid-associated protein Asuc_0779</fullName>
    </recommendedName>
</protein>
<evidence type="ECO:0000255" key="1">
    <source>
        <dbReference type="HAMAP-Rule" id="MF_00730"/>
    </source>
</evidence>
<accession>A6VMF2</accession>
<gene>
    <name type="ordered locus">Asuc_0779</name>
</gene>
<organism>
    <name type="scientific">Actinobacillus succinogenes (strain ATCC 55618 / DSM 22257 / CCUG 43843 / 130Z)</name>
    <dbReference type="NCBI Taxonomy" id="339671"/>
    <lineage>
        <taxon>Bacteria</taxon>
        <taxon>Pseudomonadati</taxon>
        <taxon>Pseudomonadota</taxon>
        <taxon>Gammaproteobacteria</taxon>
        <taxon>Pasteurellales</taxon>
        <taxon>Pasteurellaceae</taxon>
        <taxon>Actinobacillus</taxon>
    </lineage>
</organism>
<feature type="chain" id="PRO_1000072784" description="Nucleoid-associated protein Asuc_0779">
    <location>
        <begin position="1"/>
        <end position="339"/>
    </location>
</feature>
<name>NDPA_ACTSZ</name>